<protein>
    <recommendedName>
        <fullName>Two-component-system connector protein SafA</fullName>
    </recommendedName>
</protein>
<dbReference type="EMBL" id="CP000034">
    <property type="protein sequence ID" value="ABB61780.1"/>
    <property type="molecule type" value="Genomic_DNA"/>
</dbReference>
<dbReference type="RefSeq" id="WP_000543400.1">
    <property type="nucleotide sequence ID" value="NC_007606.1"/>
</dbReference>
<dbReference type="RefSeq" id="YP_403271.1">
    <property type="nucleotide sequence ID" value="NC_007606.1"/>
</dbReference>
<dbReference type="SMR" id="Q32FX5"/>
<dbReference type="STRING" id="300267.SDY_1659"/>
<dbReference type="EnsemblBacteria" id="ABB61780">
    <property type="protein sequence ID" value="ABB61780"/>
    <property type="gene ID" value="SDY_1659"/>
</dbReference>
<dbReference type="KEGG" id="sdy:SDY_1659"/>
<dbReference type="HOGENOM" id="CLU_2842804_0_0_6"/>
<dbReference type="Proteomes" id="UP000002716">
    <property type="component" value="Chromosome"/>
</dbReference>
<dbReference type="GO" id="GO:0005886">
    <property type="term" value="C:plasma membrane"/>
    <property type="evidence" value="ECO:0007669"/>
    <property type="project" value="UniProtKB-SubCell"/>
</dbReference>
<dbReference type="InterPro" id="IPR031411">
    <property type="entry name" value="SafA"/>
</dbReference>
<dbReference type="Pfam" id="PF17073">
    <property type="entry name" value="SafA"/>
    <property type="match status" value="1"/>
</dbReference>
<name>SAFA_SHIDS</name>
<comment type="function">
    <text evidence="1">Connects the signal transduction between the two-component systems EvgS/EvgA and PhoQ/PhoP, by directly interacting with PhoQ and thus activating the PhoQ/PhoP system, in response to acid stress conditions.</text>
</comment>
<comment type="subunit">
    <text evidence="1">Interacts with PhoQ.</text>
</comment>
<comment type="subcellular location">
    <subcellularLocation>
        <location evidence="1">Cell inner membrane</location>
        <topology evidence="1">Single-pass type II membrane protein</topology>
    </subcellularLocation>
</comment>
<comment type="induction">
    <text evidence="1">By acid stress, via the EvgS/EvgA system.</text>
</comment>
<comment type="similarity">
    <text evidence="3">Belongs to the SafA family.</text>
</comment>
<reference key="1">
    <citation type="journal article" date="2005" name="Nucleic Acids Res.">
        <title>Genome dynamics and diversity of Shigella species, the etiologic agents of bacillary dysentery.</title>
        <authorList>
            <person name="Yang F."/>
            <person name="Yang J."/>
            <person name="Zhang X."/>
            <person name="Chen L."/>
            <person name="Jiang Y."/>
            <person name="Yan Y."/>
            <person name="Tang X."/>
            <person name="Wang J."/>
            <person name="Xiong Z."/>
            <person name="Dong J."/>
            <person name="Xue Y."/>
            <person name="Zhu Y."/>
            <person name="Xu X."/>
            <person name="Sun L."/>
            <person name="Chen S."/>
            <person name="Nie H."/>
            <person name="Peng J."/>
            <person name="Xu J."/>
            <person name="Wang Y."/>
            <person name="Yuan Z."/>
            <person name="Wen Y."/>
            <person name="Yao Z."/>
            <person name="Shen Y."/>
            <person name="Qiang B."/>
            <person name="Hou Y."/>
            <person name="Yu J."/>
            <person name="Jin Q."/>
        </authorList>
    </citation>
    <scope>NUCLEOTIDE SEQUENCE [LARGE SCALE GENOMIC DNA]</scope>
    <source>
        <strain>Sd197</strain>
    </source>
</reference>
<gene>
    <name type="primary">safA</name>
    <name type="ordered locus">SDY_1659</name>
</gene>
<proteinExistence type="inferred from homology"/>
<feature type="chain" id="PRO_0000223719" description="Two-component-system connector protein SafA">
    <location>
        <begin position="1"/>
        <end position="65"/>
    </location>
</feature>
<feature type="topological domain" description="Cytoplasmic" evidence="1">
    <location>
        <begin position="1"/>
        <end position="18"/>
    </location>
</feature>
<feature type="transmembrane region" description="Helical; Signal-anchor for type II membrane protein" evidence="2">
    <location>
        <begin position="19"/>
        <end position="39"/>
    </location>
</feature>
<feature type="topological domain" description="Periplasmic" evidence="1">
    <location>
        <begin position="40"/>
        <end position="65"/>
    </location>
</feature>
<evidence type="ECO:0000250" key="1"/>
<evidence type="ECO:0000255" key="2"/>
<evidence type="ECO:0000305" key="3"/>
<organism>
    <name type="scientific">Shigella dysenteriae serotype 1 (strain Sd197)</name>
    <dbReference type="NCBI Taxonomy" id="300267"/>
    <lineage>
        <taxon>Bacteria</taxon>
        <taxon>Pseudomonadati</taxon>
        <taxon>Pseudomonadota</taxon>
        <taxon>Gammaproteobacteria</taxon>
        <taxon>Enterobacterales</taxon>
        <taxon>Enterobacteriaceae</taxon>
        <taxon>Shigella</taxon>
    </lineage>
</organism>
<keyword id="KW-0997">Cell inner membrane</keyword>
<keyword id="KW-1003">Cell membrane</keyword>
<keyword id="KW-0472">Membrane</keyword>
<keyword id="KW-1185">Reference proteome</keyword>
<keyword id="KW-0735">Signal-anchor</keyword>
<keyword id="KW-0346">Stress response</keyword>
<keyword id="KW-0812">Transmembrane</keyword>
<keyword id="KW-1133">Transmembrane helix</keyword>
<sequence length="65" mass="7256">MHATTVKNKITQRDNYKGIMSVIVVVLLLTLTLIAIFSAIDQLGISEMGRIARDLTHFIINSLQD</sequence>
<accession>Q32FX5</accession>